<organism>
    <name type="scientific">Mus musculus</name>
    <name type="common">Mouse</name>
    <dbReference type="NCBI Taxonomy" id="10090"/>
    <lineage>
        <taxon>Eukaryota</taxon>
        <taxon>Metazoa</taxon>
        <taxon>Chordata</taxon>
        <taxon>Craniata</taxon>
        <taxon>Vertebrata</taxon>
        <taxon>Euteleostomi</taxon>
        <taxon>Mammalia</taxon>
        <taxon>Eutheria</taxon>
        <taxon>Euarchontoglires</taxon>
        <taxon>Glires</taxon>
        <taxon>Rodentia</taxon>
        <taxon>Myomorpha</taxon>
        <taxon>Muroidea</taxon>
        <taxon>Muridae</taxon>
        <taxon>Murinae</taxon>
        <taxon>Mus</taxon>
        <taxon>Mus</taxon>
    </lineage>
</organism>
<proteinExistence type="evidence at protein level"/>
<name>AMPB_MOUSE</name>
<protein>
    <recommendedName>
        <fullName>Aminopeptidase B</fullName>
        <shortName>AP-B</shortName>
        <ecNumber>3.4.11.6</ecNumber>
    </recommendedName>
    <alternativeName>
        <fullName>Arginine aminopeptidase</fullName>
    </alternativeName>
    <alternativeName>
        <fullName>Arginyl aminopeptidase</fullName>
    </alternativeName>
    <alternativeName>
        <fullName>Cytosol aminopeptidase IV</fullName>
    </alternativeName>
</protein>
<feature type="chain" id="PRO_0000095089" description="Aminopeptidase B">
    <location>
        <begin position="1"/>
        <end position="650"/>
    </location>
</feature>
<feature type="active site" description="Proton acceptor" evidence="3">
    <location>
        <position position="326"/>
    </location>
</feature>
<feature type="binding site" evidence="1">
    <location>
        <begin position="298"/>
        <end position="302"/>
    </location>
    <ligand>
        <name>substrate</name>
    </ligand>
</feature>
<feature type="binding site" evidence="3">
    <location>
        <position position="325"/>
    </location>
    <ligand>
        <name>Zn(2+)</name>
        <dbReference type="ChEBI" id="CHEBI:29105"/>
        <note>catalytic</note>
    </ligand>
</feature>
<feature type="binding site" evidence="3">
    <location>
        <position position="329"/>
    </location>
    <ligand>
        <name>Zn(2+)</name>
        <dbReference type="ChEBI" id="CHEBI:29105"/>
        <note>catalytic</note>
    </ligand>
</feature>
<feature type="binding site" evidence="3">
    <location>
        <position position="348"/>
    </location>
    <ligand>
        <name>Zn(2+)</name>
        <dbReference type="ChEBI" id="CHEBI:29105"/>
        <note>catalytic</note>
    </ligand>
</feature>
<feature type="site" description="Transition state stabilizer" evidence="1">
    <location>
        <position position="414"/>
    </location>
</feature>
<feature type="modified residue" description="N6-acetyllysine" evidence="2">
    <location>
        <position position="446"/>
    </location>
</feature>
<feature type="sequence conflict" description="In Ref. 3; AAH19200." evidence="4" ref="3">
    <original>A</original>
    <variation>G</variation>
    <location>
        <position position="11"/>
    </location>
</feature>
<feature type="sequence conflict" description="In Ref. 3; AAH19200." evidence="4" ref="3">
    <original>R</original>
    <variation>P</variation>
    <location>
        <position position="127"/>
    </location>
</feature>
<accession>Q8VCT3</accession>
<accession>Q3TX27</accession>
<gene>
    <name type="primary">Rnpep</name>
</gene>
<keyword id="KW-0007">Acetylation</keyword>
<keyword id="KW-0031">Aminopeptidase</keyword>
<keyword id="KW-0378">Hydrolase</keyword>
<keyword id="KW-0479">Metal-binding</keyword>
<keyword id="KW-0482">Metalloprotease</keyword>
<keyword id="KW-0645">Protease</keyword>
<keyword id="KW-1185">Reference proteome</keyword>
<keyword id="KW-0964">Secreted</keyword>
<keyword id="KW-0862">Zinc</keyword>
<sequence>MESGGPGNYSAAARRPLHSAQAVDVASASSFRAFEILHLHLDLRAEFGPPGPGPGSRGLSGTATLELRCLLPEGASELRLDSHSCLEVTAATLRRGQPGDQQAPAEPVPFHTQPFSHYGQALCVAFRQPCGAADRFELELTYRVGEGPGVCWLAPEQTAGKKKPFVYTQGQAVLNRAFFPCFDTPAVKCTYSALIEVPDGFTAVMSADTWEKRGPNKFFFQMSHPIPSYLIALAIGDLASAEVGPRSRVWAEPCLIEAAKEEYSGVIEEFLATGEKLFGPYVWGRYDLLFMPPSFPFGGMENPCLTFVTPCLLAGDRSLADVIIHEISHSWFGNLVTNANWGEFWLNEGFTMYAQRRISTILFGAAYTCLEAATGRALLRQHMNVSGEENPLNKLRVKIEPGVDPDDTYNETPYEKGYCFVSYLAHLVGDQDQFDKFLKAYVDEFKFQSILAEDFLEFYLEYFPELKKKGVDSIPGFEFDRWLNTPGWPPYLPDLSPGDSLMKPAEELAELWVTSEPDMQAIEAVAISTWKTYQLVYFLDKILQKSPLPPGNVKKLGETYPKISNAQNAELRLRWGQIILKNDYQEEFQKVKDFLQSQGKQKYTLPLYHAMMGGSEMARTLAKDTFAATASQLHSNVVNYVQQILAPKDS</sequence>
<comment type="function">
    <text evidence="1">Exopeptidase which selectively removes arginine and/or lysine residues from the N-terminus of several peptide substrates including Arg(0)-Leu-enkephalin, Arg(0)-Met-enkephalin and Arg(-1)-Lys(0)-somatostatin-14. Can hydrolyze leukotriene A4 (LTA-4) into leukotriene B4 (LTB-4) (By similarity).</text>
</comment>
<comment type="catalytic activity">
    <reaction>
        <text>Release of N-terminal Arg and Lys from oligopeptides when P1' is not Pro. Also acts on arylamides of Arg and Lys.</text>
        <dbReference type="EC" id="3.4.11.6"/>
    </reaction>
</comment>
<comment type="cofactor">
    <cofactor evidence="1">
        <name>Zn(2+)</name>
        <dbReference type="ChEBI" id="CHEBI:29105"/>
    </cofactor>
    <text evidence="1">Binds 1 zinc ion per subunit.</text>
</comment>
<comment type="subunit">
    <text evidence="1">Monomer.</text>
</comment>
<comment type="subcellular location">
    <subcellularLocation>
        <location>Secreted</location>
    </subcellularLocation>
</comment>
<comment type="similarity">
    <text evidence="4">Belongs to the peptidase M1 family.</text>
</comment>
<reference key="1">
    <citation type="journal article" date="2005" name="Science">
        <title>The transcriptional landscape of the mammalian genome.</title>
        <authorList>
            <person name="Carninci P."/>
            <person name="Kasukawa T."/>
            <person name="Katayama S."/>
            <person name="Gough J."/>
            <person name="Frith M.C."/>
            <person name="Maeda N."/>
            <person name="Oyama R."/>
            <person name="Ravasi T."/>
            <person name="Lenhard B."/>
            <person name="Wells C."/>
            <person name="Kodzius R."/>
            <person name="Shimokawa K."/>
            <person name="Bajic V.B."/>
            <person name="Brenner S.E."/>
            <person name="Batalov S."/>
            <person name="Forrest A.R."/>
            <person name="Zavolan M."/>
            <person name="Davis M.J."/>
            <person name="Wilming L.G."/>
            <person name="Aidinis V."/>
            <person name="Allen J.E."/>
            <person name="Ambesi-Impiombato A."/>
            <person name="Apweiler R."/>
            <person name="Aturaliya R.N."/>
            <person name="Bailey T.L."/>
            <person name="Bansal M."/>
            <person name="Baxter L."/>
            <person name="Beisel K.W."/>
            <person name="Bersano T."/>
            <person name="Bono H."/>
            <person name="Chalk A.M."/>
            <person name="Chiu K.P."/>
            <person name="Choudhary V."/>
            <person name="Christoffels A."/>
            <person name="Clutterbuck D.R."/>
            <person name="Crowe M.L."/>
            <person name="Dalla E."/>
            <person name="Dalrymple B.P."/>
            <person name="de Bono B."/>
            <person name="Della Gatta G."/>
            <person name="di Bernardo D."/>
            <person name="Down T."/>
            <person name="Engstrom P."/>
            <person name="Fagiolini M."/>
            <person name="Faulkner G."/>
            <person name="Fletcher C.F."/>
            <person name="Fukushima T."/>
            <person name="Furuno M."/>
            <person name="Futaki S."/>
            <person name="Gariboldi M."/>
            <person name="Georgii-Hemming P."/>
            <person name="Gingeras T.R."/>
            <person name="Gojobori T."/>
            <person name="Green R.E."/>
            <person name="Gustincich S."/>
            <person name="Harbers M."/>
            <person name="Hayashi Y."/>
            <person name="Hensch T.K."/>
            <person name="Hirokawa N."/>
            <person name="Hill D."/>
            <person name="Huminiecki L."/>
            <person name="Iacono M."/>
            <person name="Ikeo K."/>
            <person name="Iwama A."/>
            <person name="Ishikawa T."/>
            <person name="Jakt M."/>
            <person name="Kanapin A."/>
            <person name="Katoh M."/>
            <person name="Kawasawa Y."/>
            <person name="Kelso J."/>
            <person name="Kitamura H."/>
            <person name="Kitano H."/>
            <person name="Kollias G."/>
            <person name="Krishnan S.P."/>
            <person name="Kruger A."/>
            <person name="Kummerfeld S.K."/>
            <person name="Kurochkin I.V."/>
            <person name="Lareau L.F."/>
            <person name="Lazarevic D."/>
            <person name="Lipovich L."/>
            <person name="Liu J."/>
            <person name="Liuni S."/>
            <person name="McWilliam S."/>
            <person name="Madan Babu M."/>
            <person name="Madera M."/>
            <person name="Marchionni L."/>
            <person name="Matsuda H."/>
            <person name="Matsuzawa S."/>
            <person name="Miki H."/>
            <person name="Mignone F."/>
            <person name="Miyake S."/>
            <person name="Morris K."/>
            <person name="Mottagui-Tabar S."/>
            <person name="Mulder N."/>
            <person name="Nakano N."/>
            <person name="Nakauchi H."/>
            <person name="Ng P."/>
            <person name="Nilsson R."/>
            <person name="Nishiguchi S."/>
            <person name="Nishikawa S."/>
            <person name="Nori F."/>
            <person name="Ohara O."/>
            <person name="Okazaki Y."/>
            <person name="Orlando V."/>
            <person name="Pang K.C."/>
            <person name="Pavan W.J."/>
            <person name="Pavesi G."/>
            <person name="Pesole G."/>
            <person name="Petrovsky N."/>
            <person name="Piazza S."/>
            <person name="Reed J."/>
            <person name="Reid J.F."/>
            <person name="Ring B.Z."/>
            <person name="Ringwald M."/>
            <person name="Rost B."/>
            <person name="Ruan Y."/>
            <person name="Salzberg S.L."/>
            <person name="Sandelin A."/>
            <person name="Schneider C."/>
            <person name="Schoenbach C."/>
            <person name="Sekiguchi K."/>
            <person name="Semple C.A."/>
            <person name="Seno S."/>
            <person name="Sessa L."/>
            <person name="Sheng Y."/>
            <person name="Shibata Y."/>
            <person name="Shimada H."/>
            <person name="Shimada K."/>
            <person name="Silva D."/>
            <person name="Sinclair B."/>
            <person name="Sperling S."/>
            <person name="Stupka E."/>
            <person name="Sugiura K."/>
            <person name="Sultana R."/>
            <person name="Takenaka Y."/>
            <person name="Taki K."/>
            <person name="Tammoja K."/>
            <person name="Tan S.L."/>
            <person name="Tang S."/>
            <person name="Taylor M.S."/>
            <person name="Tegner J."/>
            <person name="Teichmann S.A."/>
            <person name="Ueda H.R."/>
            <person name="van Nimwegen E."/>
            <person name="Verardo R."/>
            <person name="Wei C.L."/>
            <person name="Yagi K."/>
            <person name="Yamanishi H."/>
            <person name="Zabarovsky E."/>
            <person name="Zhu S."/>
            <person name="Zimmer A."/>
            <person name="Hide W."/>
            <person name="Bult C."/>
            <person name="Grimmond S.M."/>
            <person name="Teasdale R.D."/>
            <person name="Liu E.T."/>
            <person name="Brusic V."/>
            <person name="Quackenbush J."/>
            <person name="Wahlestedt C."/>
            <person name="Mattick J.S."/>
            <person name="Hume D.A."/>
            <person name="Kai C."/>
            <person name="Sasaki D."/>
            <person name="Tomaru Y."/>
            <person name="Fukuda S."/>
            <person name="Kanamori-Katayama M."/>
            <person name="Suzuki M."/>
            <person name="Aoki J."/>
            <person name="Arakawa T."/>
            <person name="Iida J."/>
            <person name="Imamura K."/>
            <person name="Itoh M."/>
            <person name="Kato T."/>
            <person name="Kawaji H."/>
            <person name="Kawagashira N."/>
            <person name="Kawashima T."/>
            <person name="Kojima M."/>
            <person name="Kondo S."/>
            <person name="Konno H."/>
            <person name="Nakano K."/>
            <person name="Ninomiya N."/>
            <person name="Nishio T."/>
            <person name="Okada M."/>
            <person name="Plessy C."/>
            <person name="Shibata K."/>
            <person name="Shiraki T."/>
            <person name="Suzuki S."/>
            <person name="Tagami M."/>
            <person name="Waki K."/>
            <person name="Watahiki A."/>
            <person name="Okamura-Oho Y."/>
            <person name="Suzuki H."/>
            <person name="Kawai J."/>
            <person name="Hayashizaki Y."/>
        </authorList>
    </citation>
    <scope>NUCLEOTIDE SEQUENCE [LARGE SCALE MRNA]</scope>
    <source>
        <strain>C57BL/6J</strain>
    </source>
</reference>
<reference key="2">
    <citation type="submission" date="2005-07" db="EMBL/GenBank/DDBJ databases">
        <authorList>
            <person name="Mural R.J."/>
            <person name="Adams M.D."/>
            <person name="Myers E.W."/>
            <person name="Smith H.O."/>
            <person name="Venter J.C."/>
        </authorList>
    </citation>
    <scope>NUCLEOTIDE SEQUENCE [LARGE SCALE GENOMIC DNA]</scope>
</reference>
<reference key="3">
    <citation type="journal article" date="2004" name="Genome Res.">
        <title>The status, quality, and expansion of the NIH full-length cDNA project: the Mammalian Gene Collection (MGC).</title>
        <authorList>
            <consortium name="The MGC Project Team"/>
        </authorList>
    </citation>
    <scope>NUCLEOTIDE SEQUENCE [LARGE SCALE MRNA]</scope>
    <source>
        <tissue>Kidney</tissue>
    </source>
</reference>
<reference key="4">
    <citation type="journal article" date="2010" name="Cell">
        <title>A tissue-specific atlas of mouse protein phosphorylation and expression.</title>
        <authorList>
            <person name="Huttlin E.L."/>
            <person name="Jedrychowski M.P."/>
            <person name="Elias J.E."/>
            <person name="Goswami T."/>
            <person name="Rad R."/>
            <person name="Beausoleil S.A."/>
            <person name="Villen J."/>
            <person name="Haas W."/>
            <person name="Sowa M.E."/>
            <person name="Gygi S.P."/>
        </authorList>
    </citation>
    <scope>IDENTIFICATION BY MASS SPECTROMETRY [LARGE SCALE ANALYSIS]</scope>
    <source>
        <tissue>Brain</tissue>
        <tissue>Brown adipose tissue</tissue>
        <tissue>Heart</tissue>
        <tissue>Kidney</tissue>
        <tissue>Liver</tissue>
        <tissue>Lung</tissue>
        <tissue>Pancreas</tissue>
        <tissue>Spleen</tissue>
        <tissue>Testis</tissue>
    </source>
</reference>
<evidence type="ECO:0000250" key="1"/>
<evidence type="ECO:0000250" key="2">
    <source>
        <dbReference type="UniProtKB" id="Q9H4A4"/>
    </source>
</evidence>
<evidence type="ECO:0000255" key="3">
    <source>
        <dbReference type="PROSITE-ProRule" id="PRU10095"/>
    </source>
</evidence>
<evidence type="ECO:0000305" key="4"/>
<dbReference type="EC" id="3.4.11.6"/>
<dbReference type="EMBL" id="AK159195">
    <property type="protein sequence ID" value="BAE34890.1"/>
    <property type="molecule type" value="mRNA"/>
</dbReference>
<dbReference type="EMBL" id="AK159445">
    <property type="protein sequence ID" value="BAE35089.1"/>
    <property type="molecule type" value="mRNA"/>
</dbReference>
<dbReference type="EMBL" id="AK159625">
    <property type="protein sequence ID" value="BAE35239.1"/>
    <property type="molecule type" value="mRNA"/>
</dbReference>
<dbReference type="EMBL" id="CH466520">
    <property type="protein sequence ID" value="EDL39584.1"/>
    <property type="molecule type" value="Genomic_DNA"/>
</dbReference>
<dbReference type="EMBL" id="BC019200">
    <property type="protein sequence ID" value="AAH19200.1"/>
    <property type="molecule type" value="mRNA"/>
</dbReference>
<dbReference type="CCDS" id="CCDS15317.1"/>
<dbReference type="RefSeq" id="NP_001153096.1">
    <property type="nucleotide sequence ID" value="NM_001159624.1"/>
</dbReference>
<dbReference type="RefSeq" id="NP_663392.2">
    <property type="nucleotide sequence ID" value="NM_145417.4"/>
</dbReference>
<dbReference type="SMR" id="Q8VCT3"/>
<dbReference type="BioGRID" id="229640">
    <property type="interactions" value="4"/>
</dbReference>
<dbReference type="FunCoup" id="Q8VCT3">
    <property type="interactions" value="964"/>
</dbReference>
<dbReference type="IntAct" id="Q8VCT3">
    <property type="interactions" value="1"/>
</dbReference>
<dbReference type="STRING" id="10090.ENSMUSP00000076564"/>
<dbReference type="BindingDB" id="Q8VCT3"/>
<dbReference type="ChEMBL" id="CHEMBL2836"/>
<dbReference type="DrugCentral" id="Q8VCT3"/>
<dbReference type="MEROPS" id="M01.014"/>
<dbReference type="GlyGen" id="Q8VCT3">
    <property type="glycosylation" value="2 sites, 1 N-linked glycan (1 site), 1 O-linked glycan (1 site)"/>
</dbReference>
<dbReference type="iPTMnet" id="Q8VCT3"/>
<dbReference type="PhosphoSitePlus" id="Q8VCT3"/>
<dbReference type="SwissPalm" id="Q8VCT3"/>
<dbReference type="jPOST" id="Q8VCT3"/>
<dbReference type="PaxDb" id="10090-ENSMUSP00000076564"/>
<dbReference type="PeptideAtlas" id="Q8VCT3"/>
<dbReference type="ProteomicsDB" id="296030"/>
<dbReference type="Pumba" id="Q8VCT3"/>
<dbReference type="Antibodypedia" id="34521">
    <property type="antibodies" value="214 antibodies from 25 providers"/>
</dbReference>
<dbReference type="DNASU" id="215615"/>
<dbReference type="Ensembl" id="ENSMUST00000077340.14">
    <property type="protein sequence ID" value="ENSMUSP00000076564.8"/>
    <property type="gene ID" value="ENSMUSG00000041926.16"/>
</dbReference>
<dbReference type="GeneID" id="215615"/>
<dbReference type="KEGG" id="mmu:215615"/>
<dbReference type="UCSC" id="uc007csy.2">
    <property type="organism name" value="mouse"/>
</dbReference>
<dbReference type="AGR" id="MGI:2384902"/>
<dbReference type="CTD" id="6051"/>
<dbReference type="MGI" id="MGI:2384902">
    <property type="gene designation" value="Rnpep"/>
</dbReference>
<dbReference type="VEuPathDB" id="HostDB:ENSMUSG00000041926"/>
<dbReference type="eggNOG" id="KOG1047">
    <property type="taxonomic scope" value="Eukaryota"/>
</dbReference>
<dbReference type="GeneTree" id="ENSGT00940000160431"/>
<dbReference type="HOGENOM" id="CLU_014505_2_1_1"/>
<dbReference type="InParanoid" id="Q8VCT3"/>
<dbReference type="OMA" id="QLMDLDD"/>
<dbReference type="OrthoDB" id="79562at2759"/>
<dbReference type="PhylomeDB" id="Q8VCT3"/>
<dbReference type="TreeFam" id="TF300758"/>
<dbReference type="BioGRID-ORCS" id="215615">
    <property type="hits" value="5 hits in 79 CRISPR screens"/>
</dbReference>
<dbReference type="ChiTaRS" id="Rnpep">
    <property type="organism name" value="mouse"/>
</dbReference>
<dbReference type="PRO" id="PR:Q8VCT3"/>
<dbReference type="Proteomes" id="UP000000589">
    <property type="component" value="Chromosome 1"/>
</dbReference>
<dbReference type="RNAct" id="Q8VCT3">
    <property type="molecule type" value="protein"/>
</dbReference>
<dbReference type="Bgee" id="ENSMUSG00000041926">
    <property type="expression patterns" value="Expressed in granulocyte and 262 other cell types or tissues"/>
</dbReference>
<dbReference type="ExpressionAtlas" id="Q8VCT3">
    <property type="expression patterns" value="baseline and differential"/>
</dbReference>
<dbReference type="GO" id="GO:0005576">
    <property type="term" value="C:extracellular region"/>
    <property type="evidence" value="ECO:0000250"/>
    <property type="project" value="UniProtKB"/>
</dbReference>
<dbReference type="GO" id="GO:0005886">
    <property type="term" value="C:plasma membrane"/>
    <property type="evidence" value="ECO:0000250"/>
    <property type="project" value="UniProtKB"/>
</dbReference>
<dbReference type="GO" id="GO:0004177">
    <property type="term" value="F:aminopeptidase activity"/>
    <property type="evidence" value="ECO:0000250"/>
    <property type="project" value="UniProtKB"/>
</dbReference>
<dbReference type="GO" id="GO:0008237">
    <property type="term" value="F:metallopeptidase activity"/>
    <property type="evidence" value="ECO:0007669"/>
    <property type="project" value="UniProtKB-KW"/>
</dbReference>
<dbReference type="GO" id="GO:0008270">
    <property type="term" value="F:zinc ion binding"/>
    <property type="evidence" value="ECO:0007669"/>
    <property type="project" value="InterPro"/>
</dbReference>
<dbReference type="GO" id="GO:0006508">
    <property type="term" value="P:proteolysis"/>
    <property type="evidence" value="ECO:0007669"/>
    <property type="project" value="UniProtKB-KW"/>
</dbReference>
<dbReference type="CDD" id="cd09599">
    <property type="entry name" value="M1_LTA4H"/>
    <property type="match status" value="1"/>
</dbReference>
<dbReference type="FunFam" id="2.60.40.1730:FF:000011">
    <property type="entry name" value="Arginyl aminopeptidase"/>
    <property type="match status" value="1"/>
</dbReference>
<dbReference type="FunFam" id="1.10.390.10:FF:000003">
    <property type="entry name" value="Leukotriene A(4) hydrolase"/>
    <property type="match status" value="1"/>
</dbReference>
<dbReference type="FunFam" id="1.25.40.320:FF:000001">
    <property type="entry name" value="Leukotriene A(4) hydrolase"/>
    <property type="match status" value="1"/>
</dbReference>
<dbReference type="FunFam" id="3.30.2010.30:FF:000001">
    <property type="entry name" value="Leukotriene A(4) hydrolase"/>
    <property type="match status" value="1"/>
</dbReference>
<dbReference type="Gene3D" id="3.30.2010.30">
    <property type="match status" value="1"/>
</dbReference>
<dbReference type="Gene3D" id="1.10.390.10">
    <property type="entry name" value="Neutral Protease Domain 2"/>
    <property type="match status" value="1"/>
</dbReference>
<dbReference type="Gene3D" id="1.25.40.320">
    <property type="entry name" value="Peptidase M1, leukotriene A4 hydrolase/aminopeptidase C-terminal domain"/>
    <property type="match status" value="1"/>
</dbReference>
<dbReference type="Gene3D" id="2.60.40.1730">
    <property type="entry name" value="tricorn interacting facor f3 domain"/>
    <property type="match status" value="1"/>
</dbReference>
<dbReference type="InterPro" id="IPR045357">
    <property type="entry name" value="Aminopeptidase_N-like_N"/>
</dbReference>
<dbReference type="InterPro" id="IPR042097">
    <property type="entry name" value="Aminopeptidase_N-like_N_sf"/>
</dbReference>
<dbReference type="InterPro" id="IPR016024">
    <property type="entry name" value="ARM-type_fold"/>
</dbReference>
<dbReference type="InterPro" id="IPR049980">
    <property type="entry name" value="LTA4H_cat"/>
</dbReference>
<dbReference type="InterPro" id="IPR038502">
    <property type="entry name" value="M1_LTA-4_hydro/amino_C_sf"/>
</dbReference>
<dbReference type="InterPro" id="IPR034015">
    <property type="entry name" value="M1_LTA4H"/>
</dbReference>
<dbReference type="InterPro" id="IPR001930">
    <property type="entry name" value="Peptidase_M1"/>
</dbReference>
<dbReference type="InterPro" id="IPR015211">
    <property type="entry name" value="Peptidase_M1_C"/>
</dbReference>
<dbReference type="InterPro" id="IPR014782">
    <property type="entry name" value="Peptidase_M1_dom"/>
</dbReference>
<dbReference type="InterPro" id="IPR027268">
    <property type="entry name" value="Peptidase_M4/M1_CTD_sf"/>
</dbReference>
<dbReference type="PANTHER" id="PTHR45726:SF1">
    <property type="entry name" value="AMINOPEPTIDASE B"/>
    <property type="match status" value="1"/>
</dbReference>
<dbReference type="PANTHER" id="PTHR45726">
    <property type="entry name" value="LEUKOTRIENE A-4 HYDROLASE"/>
    <property type="match status" value="1"/>
</dbReference>
<dbReference type="Pfam" id="PF09127">
    <property type="entry name" value="Leuk-A4-hydro_C"/>
    <property type="match status" value="1"/>
</dbReference>
<dbReference type="Pfam" id="PF01433">
    <property type="entry name" value="Peptidase_M1"/>
    <property type="match status" value="1"/>
</dbReference>
<dbReference type="Pfam" id="PF17900">
    <property type="entry name" value="Peptidase_M1_N"/>
    <property type="match status" value="1"/>
</dbReference>
<dbReference type="PRINTS" id="PR00756">
    <property type="entry name" value="ALADIPTASE"/>
</dbReference>
<dbReference type="SMART" id="SM01263">
    <property type="entry name" value="Leuk-A4-hydro_C"/>
    <property type="match status" value="1"/>
</dbReference>
<dbReference type="SUPFAM" id="SSF48371">
    <property type="entry name" value="ARM repeat"/>
    <property type="match status" value="1"/>
</dbReference>
<dbReference type="SUPFAM" id="SSF63737">
    <property type="entry name" value="Leukotriene A4 hydrolase N-terminal domain"/>
    <property type="match status" value="1"/>
</dbReference>
<dbReference type="SUPFAM" id="SSF55486">
    <property type="entry name" value="Metalloproteases ('zincins'), catalytic domain"/>
    <property type="match status" value="1"/>
</dbReference>
<dbReference type="PROSITE" id="PS00142">
    <property type="entry name" value="ZINC_PROTEASE"/>
    <property type="match status" value="1"/>
</dbReference>